<accession>Q6C9T3</accession>
<keyword id="KW-0256">Endoplasmic reticulum</keyword>
<keyword id="KW-0328">Glycosyltransferase</keyword>
<keyword id="KW-0472">Membrane</keyword>
<keyword id="KW-1185">Reference proteome</keyword>
<keyword id="KW-0808">Transferase</keyword>
<keyword id="KW-0812">Transmembrane</keyword>
<keyword id="KW-1133">Transmembrane helix</keyword>
<dbReference type="EC" id="2.4.1.131" evidence="1"/>
<dbReference type="EMBL" id="CR382130">
    <property type="protein sequence ID" value="CAG80767.1"/>
    <property type="molecule type" value="Genomic_DNA"/>
</dbReference>
<dbReference type="RefSeq" id="XP_502579.1">
    <property type="nucleotide sequence ID" value="XM_502579.1"/>
</dbReference>
<dbReference type="FunCoup" id="Q6C9T3">
    <property type="interactions" value="432"/>
</dbReference>
<dbReference type="STRING" id="284591.Q6C9T3"/>
<dbReference type="CAZy" id="GT4">
    <property type="family name" value="Glycosyltransferase Family 4"/>
</dbReference>
<dbReference type="GlyCosmos" id="Q6C9T3">
    <property type="glycosylation" value="2 sites, No reported glycans"/>
</dbReference>
<dbReference type="EnsemblFungi" id="CAG80767">
    <property type="protein sequence ID" value="CAG80767"/>
    <property type="gene ID" value="YALI0_D08558g"/>
</dbReference>
<dbReference type="KEGG" id="yli:2910710"/>
<dbReference type="VEuPathDB" id="FungiDB:YALI0_D08558g"/>
<dbReference type="HOGENOM" id="CLU_017896_1_1_1"/>
<dbReference type="InParanoid" id="Q6C9T3"/>
<dbReference type="OMA" id="WKHFTLI"/>
<dbReference type="OrthoDB" id="114470at4891"/>
<dbReference type="UniPathway" id="UPA00378"/>
<dbReference type="Proteomes" id="UP000001300">
    <property type="component" value="Chromosome D"/>
</dbReference>
<dbReference type="GO" id="GO:0005789">
    <property type="term" value="C:endoplasmic reticulum membrane"/>
    <property type="evidence" value="ECO:0000318"/>
    <property type="project" value="GO_Central"/>
</dbReference>
<dbReference type="GO" id="GO:0004377">
    <property type="term" value="F:GDP-Man:Man3GlcNAc2-PP-Dol alpha-1,2-mannosyltransferase activity"/>
    <property type="evidence" value="ECO:0000318"/>
    <property type="project" value="GO_Central"/>
</dbReference>
<dbReference type="GO" id="GO:0006488">
    <property type="term" value="P:dolichol-linked oligosaccharide biosynthetic process"/>
    <property type="evidence" value="ECO:0000318"/>
    <property type="project" value="GO_Central"/>
</dbReference>
<dbReference type="CDD" id="cd03806">
    <property type="entry name" value="GT4_ALG11-like"/>
    <property type="match status" value="1"/>
</dbReference>
<dbReference type="Gene3D" id="3.40.50.2000">
    <property type="entry name" value="Glycogen Phosphorylase B"/>
    <property type="match status" value="1"/>
</dbReference>
<dbReference type="InterPro" id="IPR038013">
    <property type="entry name" value="ALG11"/>
</dbReference>
<dbReference type="InterPro" id="IPR031814">
    <property type="entry name" value="ALG11_N"/>
</dbReference>
<dbReference type="InterPro" id="IPR001296">
    <property type="entry name" value="Glyco_trans_1"/>
</dbReference>
<dbReference type="PANTHER" id="PTHR45919">
    <property type="entry name" value="GDP-MAN:MAN(3)GLCNAC(2)-PP-DOL ALPHA-1,2-MANNOSYLTRANSFERASE"/>
    <property type="match status" value="1"/>
</dbReference>
<dbReference type="PANTHER" id="PTHR45919:SF1">
    <property type="entry name" value="GDP-MAN:MAN(3)GLCNAC(2)-PP-DOL ALPHA-1,2-MANNOSYLTRANSFERASE"/>
    <property type="match status" value="1"/>
</dbReference>
<dbReference type="Pfam" id="PF15924">
    <property type="entry name" value="ALG11_N"/>
    <property type="match status" value="1"/>
</dbReference>
<dbReference type="Pfam" id="PF00534">
    <property type="entry name" value="Glycos_transf_1"/>
    <property type="match status" value="1"/>
</dbReference>
<dbReference type="SUPFAM" id="SSF53756">
    <property type="entry name" value="UDP-Glycosyltransferase/glycogen phosphorylase"/>
    <property type="match status" value="1"/>
</dbReference>
<proteinExistence type="inferred from homology"/>
<evidence type="ECO:0000250" key="1">
    <source>
        <dbReference type="UniProtKB" id="P53954"/>
    </source>
</evidence>
<evidence type="ECO:0000255" key="2"/>
<evidence type="ECO:0000305" key="3"/>
<protein>
    <recommendedName>
        <fullName evidence="1">GDP-Man:Man(3)GlcNAc(2)-PP-Dol alpha-1,2-mannosyltransferase</fullName>
        <ecNumber evidence="1">2.4.1.131</ecNumber>
    </recommendedName>
    <alternativeName>
        <fullName>Alpha-1,2-mannosyltransferase ALG11</fullName>
    </alternativeName>
    <alternativeName>
        <fullName>Asparagine-linked glycosylation protein 11</fullName>
    </alternativeName>
    <alternativeName>
        <fullName>Glycolipid 2-alpha-mannosyltransferase</fullName>
    </alternativeName>
</protein>
<name>ALG11_YARLI</name>
<comment type="function">
    <text evidence="1">GDP-Man:Man(3)GlcNAc(2)-PP-Dol alpha-1,2-mannosyltransferase that operates in the biosynthetic pathway of dolichol-linked oligosaccharides, the glycan precursors employed in protein asparagine (N)-glycosylation. The assembly of dolichol-linked oligosaccharides begins on the cytosolic side of the endoplasmic reticulum membrane and finishes in its lumen. The sequential addition of sugars to dolichol pyrophosphate produces dolichol-linked oligosaccharides containing fourteen sugars, including two GlcNAcs, nine mannoses and three glucoses. Once assembled, the oligosaccharide is transferred from the lipid to nascent proteins by oligosaccharyltransferases. Catalyzes, on the cytoplasmic face of the endoplasmic reticulum, the addition of the fourth and fifth mannose residues to the dolichol-linked oligosaccharide chain, to produce Man(5)GlcNAc(2)-PP-dolichol core oligosaccharide.</text>
</comment>
<comment type="catalytic activity">
    <reaction evidence="1">
        <text>an alpha-D-Man-(1-&gt;3)-[alpha-D-Man-(1-&gt;6)]-beta-D-Man-(1-&gt;4)-beta-D-GlcNAc-(1-&gt;4)-alpha-D-GlcNAc-diphospho-di-trans,poly-cis-dolichol + 2 GDP-alpha-D-mannose = an alpha-D-Man-(1-&gt;2)-alpha-D-Man-(1-&gt;2)-alpha-D-Man-(1-&gt;3)-[alpha-D-Man-(1-&gt;6)]-beta-D-Man-(1-&gt;4)-beta-D-GlcNAc-(1-&gt;4)-alpha-D-GlcNAc-diphospho-di-trans,poly-cis-dolichol + 2 GDP + 2 H(+)</text>
        <dbReference type="Rhea" id="RHEA:29523"/>
        <dbReference type="Rhea" id="RHEA-COMP:19515"/>
        <dbReference type="Rhea" id="RHEA-COMP:19516"/>
        <dbReference type="ChEBI" id="CHEBI:15378"/>
        <dbReference type="ChEBI" id="CHEBI:57527"/>
        <dbReference type="ChEBI" id="CHEBI:58189"/>
        <dbReference type="ChEBI" id="CHEBI:132511"/>
        <dbReference type="ChEBI" id="CHEBI:132515"/>
        <dbReference type="EC" id="2.4.1.131"/>
    </reaction>
    <physiologicalReaction direction="left-to-right" evidence="1">
        <dbReference type="Rhea" id="RHEA:29524"/>
    </physiologicalReaction>
</comment>
<comment type="pathway">
    <text evidence="1">Protein modification; protein glycosylation.</text>
</comment>
<comment type="subcellular location">
    <subcellularLocation>
        <location evidence="1">Endoplasmic reticulum membrane</location>
        <topology evidence="1">Single-pass membrane protein</topology>
    </subcellularLocation>
</comment>
<comment type="similarity">
    <text evidence="3">Belongs to the glycosyltransferase group 1 family.</text>
</comment>
<gene>
    <name type="primary">ALG11</name>
    <name type="ordered locus">YALI0D08558g</name>
</gene>
<organism>
    <name type="scientific">Yarrowia lipolytica (strain CLIB 122 / E 150)</name>
    <name type="common">Yeast</name>
    <name type="synonym">Candida lipolytica</name>
    <dbReference type="NCBI Taxonomy" id="284591"/>
    <lineage>
        <taxon>Eukaryota</taxon>
        <taxon>Fungi</taxon>
        <taxon>Dikarya</taxon>
        <taxon>Ascomycota</taxon>
        <taxon>Saccharomycotina</taxon>
        <taxon>Dipodascomycetes</taxon>
        <taxon>Dipodascales</taxon>
        <taxon>Dipodascales incertae sedis</taxon>
        <taxon>Yarrowia</taxon>
    </lineage>
</organism>
<sequence length="635" mass="71363">MALQLDLPTLHDLRVVLNADFLAALAALLLLAVILVPLCSYISLYAWSAILAFKLRSPPANWEKSIVKGVQANGTSTLFGFGFWQAAAVRRQLILQSNDPSYYSVTHVSRRSEIAISPEDRNTEFRNRAQDSGAPRRVIYGFFHPYANAGGGGERVLWAAVKDTLMYDDNIICAIYCGEQDLPTRTSPSTVLDAAVSNFHVTELADKELRKRIVFIGMRGRRLVDPKTWPRFTLMMQAAGSVWMAWHGISTLVPDVFVDTMGYPFAYPLVSWVTHVPVAAYVHYPVISKDMLATVSLKQSPVRAALAVAKLVYWRVFALTYTFAGSYCSVVMTNSSWTNNHMQHMWWYNHKAEHIKIVYPPCGTQALSEIAMSEETSARSPNIVYIAQFRPEKRHDIVLREFNKFYKEYTEKYPNQPAPHLTFVGTVRNDDDKSRVYLLRLQARDLVNPDSVSFVLDAPFDKVRDILRTASMGVNAMWNEHFGIVVVEYMSAGLIPVVHNSGGPKCDIVVPYEGQSTGNSGTLSAMPSSTSIRSHYEAVPPGPTGFHFNCPGSDPTTDSGPSYDGEPIGTLAETLMRAFELSESDTHNMRARARESVKKRFSNEQFGSHWQVRMRILEKLEQIRRGHRLTRGDFD</sequence>
<feature type="chain" id="PRO_0000080279" description="GDP-Man:Man(3)GlcNAc(2)-PP-Dol alpha-1,2-mannosyltransferase">
    <location>
        <begin position="1"/>
        <end position="635"/>
    </location>
</feature>
<feature type="topological domain" description="Lumenal" evidence="1">
    <location>
        <begin position="1"/>
        <end position="21"/>
    </location>
</feature>
<feature type="transmembrane region" description="Helical" evidence="2">
    <location>
        <begin position="22"/>
        <end position="42"/>
    </location>
</feature>
<feature type="topological domain" description="Cytoplasmic" evidence="1">
    <location>
        <begin position="43"/>
        <end position="231"/>
    </location>
</feature>
<feature type="intramembrane region" description="Helical" evidence="2">
    <location>
        <begin position="232"/>
        <end position="252"/>
    </location>
</feature>
<feature type="topological domain" description="Cytoplasmic" evidence="1">
    <location>
        <begin position="253"/>
        <end position="481"/>
    </location>
</feature>
<feature type="intramembrane region" description="Helical" evidence="2">
    <location>
        <begin position="482"/>
        <end position="502"/>
    </location>
</feature>
<feature type="topological domain" description="Cytoplasmic" evidence="1">
    <location>
        <begin position="503"/>
        <end position="635"/>
    </location>
</feature>
<reference key="1">
    <citation type="journal article" date="2004" name="Nature">
        <title>Genome evolution in yeasts.</title>
        <authorList>
            <person name="Dujon B."/>
            <person name="Sherman D."/>
            <person name="Fischer G."/>
            <person name="Durrens P."/>
            <person name="Casaregola S."/>
            <person name="Lafontaine I."/>
            <person name="de Montigny J."/>
            <person name="Marck C."/>
            <person name="Neuveglise C."/>
            <person name="Talla E."/>
            <person name="Goffard N."/>
            <person name="Frangeul L."/>
            <person name="Aigle M."/>
            <person name="Anthouard V."/>
            <person name="Babour A."/>
            <person name="Barbe V."/>
            <person name="Barnay S."/>
            <person name="Blanchin S."/>
            <person name="Beckerich J.-M."/>
            <person name="Beyne E."/>
            <person name="Bleykasten C."/>
            <person name="Boisrame A."/>
            <person name="Boyer J."/>
            <person name="Cattolico L."/>
            <person name="Confanioleri F."/>
            <person name="de Daruvar A."/>
            <person name="Despons L."/>
            <person name="Fabre E."/>
            <person name="Fairhead C."/>
            <person name="Ferry-Dumazet H."/>
            <person name="Groppi A."/>
            <person name="Hantraye F."/>
            <person name="Hennequin C."/>
            <person name="Jauniaux N."/>
            <person name="Joyet P."/>
            <person name="Kachouri R."/>
            <person name="Kerrest A."/>
            <person name="Koszul R."/>
            <person name="Lemaire M."/>
            <person name="Lesur I."/>
            <person name="Ma L."/>
            <person name="Muller H."/>
            <person name="Nicaud J.-M."/>
            <person name="Nikolski M."/>
            <person name="Oztas S."/>
            <person name="Ozier-Kalogeropoulos O."/>
            <person name="Pellenz S."/>
            <person name="Potier S."/>
            <person name="Richard G.-F."/>
            <person name="Straub M.-L."/>
            <person name="Suleau A."/>
            <person name="Swennen D."/>
            <person name="Tekaia F."/>
            <person name="Wesolowski-Louvel M."/>
            <person name="Westhof E."/>
            <person name="Wirth B."/>
            <person name="Zeniou-Meyer M."/>
            <person name="Zivanovic Y."/>
            <person name="Bolotin-Fukuhara M."/>
            <person name="Thierry A."/>
            <person name="Bouchier C."/>
            <person name="Caudron B."/>
            <person name="Scarpelli C."/>
            <person name="Gaillardin C."/>
            <person name="Weissenbach J."/>
            <person name="Wincker P."/>
            <person name="Souciet J.-L."/>
        </authorList>
    </citation>
    <scope>NUCLEOTIDE SEQUENCE [LARGE SCALE GENOMIC DNA]</scope>
    <source>
        <strain>CLIB 122 / E 150</strain>
    </source>
</reference>